<dbReference type="EC" id="7.4.2.8" evidence="1"/>
<dbReference type="EMBL" id="CP000431">
    <property type="protein sequence ID" value="ABG98106.1"/>
    <property type="status" value="ALT_INIT"/>
    <property type="molecule type" value="Genomic_DNA"/>
</dbReference>
<dbReference type="RefSeq" id="WP_011598264.1">
    <property type="nucleotide sequence ID" value="NC_008268.1"/>
</dbReference>
<dbReference type="SMR" id="Q0S2Y0"/>
<dbReference type="KEGG" id="rha:RHA1_ro06329"/>
<dbReference type="PATRIC" id="fig|101510.16.peg.6380"/>
<dbReference type="eggNOG" id="COG0653">
    <property type="taxonomic scope" value="Bacteria"/>
</dbReference>
<dbReference type="HOGENOM" id="CLU_005314_3_0_11"/>
<dbReference type="OrthoDB" id="9805579at2"/>
<dbReference type="Proteomes" id="UP000008710">
    <property type="component" value="Chromosome"/>
</dbReference>
<dbReference type="GO" id="GO:0031522">
    <property type="term" value="C:cell envelope Sec protein transport complex"/>
    <property type="evidence" value="ECO:0007669"/>
    <property type="project" value="TreeGrafter"/>
</dbReference>
<dbReference type="GO" id="GO:0005829">
    <property type="term" value="C:cytosol"/>
    <property type="evidence" value="ECO:0007669"/>
    <property type="project" value="TreeGrafter"/>
</dbReference>
<dbReference type="GO" id="GO:0005886">
    <property type="term" value="C:plasma membrane"/>
    <property type="evidence" value="ECO:0007669"/>
    <property type="project" value="UniProtKB-SubCell"/>
</dbReference>
<dbReference type="GO" id="GO:0005524">
    <property type="term" value="F:ATP binding"/>
    <property type="evidence" value="ECO:0007669"/>
    <property type="project" value="UniProtKB-UniRule"/>
</dbReference>
<dbReference type="GO" id="GO:0008564">
    <property type="term" value="F:protein-exporting ATPase activity"/>
    <property type="evidence" value="ECO:0007669"/>
    <property type="project" value="UniProtKB-EC"/>
</dbReference>
<dbReference type="GO" id="GO:0065002">
    <property type="term" value="P:intracellular protein transmembrane transport"/>
    <property type="evidence" value="ECO:0007669"/>
    <property type="project" value="UniProtKB-UniRule"/>
</dbReference>
<dbReference type="GO" id="GO:0017038">
    <property type="term" value="P:protein import"/>
    <property type="evidence" value="ECO:0007669"/>
    <property type="project" value="InterPro"/>
</dbReference>
<dbReference type="GO" id="GO:0006605">
    <property type="term" value="P:protein targeting"/>
    <property type="evidence" value="ECO:0007669"/>
    <property type="project" value="UniProtKB-UniRule"/>
</dbReference>
<dbReference type="GO" id="GO:0043952">
    <property type="term" value="P:protein transport by the Sec complex"/>
    <property type="evidence" value="ECO:0007669"/>
    <property type="project" value="TreeGrafter"/>
</dbReference>
<dbReference type="CDD" id="cd17928">
    <property type="entry name" value="DEXDc_SecA"/>
    <property type="match status" value="1"/>
</dbReference>
<dbReference type="CDD" id="cd18803">
    <property type="entry name" value="SF2_C_secA"/>
    <property type="match status" value="1"/>
</dbReference>
<dbReference type="FunFam" id="1.10.3060.10:FF:000002">
    <property type="entry name" value="Preprotein translocase subunit SecA"/>
    <property type="match status" value="1"/>
</dbReference>
<dbReference type="FunFam" id="3.40.50.300:FF:000113">
    <property type="entry name" value="Preprotein translocase subunit SecA"/>
    <property type="match status" value="1"/>
</dbReference>
<dbReference type="FunFam" id="3.40.50.300:FF:000334">
    <property type="entry name" value="Protein translocase subunit SecA"/>
    <property type="match status" value="1"/>
</dbReference>
<dbReference type="FunFam" id="3.90.1440.10:FF:000002">
    <property type="entry name" value="Protein translocase subunit SecA"/>
    <property type="match status" value="1"/>
</dbReference>
<dbReference type="Gene3D" id="1.10.3060.10">
    <property type="entry name" value="Helical scaffold and wing domains of SecA"/>
    <property type="match status" value="1"/>
</dbReference>
<dbReference type="Gene3D" id="3.40.50.300">
    <property type="entry name" value="P-loop containing nucleotide triphosphate hydrolases"/>
    <property type="match status" value="2"/>
</dbReference>
<dbReference type="Gene3D" id="3.90.1440.10">
    <property type="entry name" value="SecA, preprotein cross-linking domain"/>
    <property type="match status" value="1"/>
</dbReference>
<dbReference type="HAMAP" id="MF_01382">
    <property type="entry name" value="SecA"/>
    <property type="match status" value="1"/>
</dbReference>
<dbReference type="InterPro" id="IPR014001">
    <property type="entry name" value="Helicase_ATP-bd"/>
</dbReference>
<dbReference type="InterPro" id="IPR001650">
    <property type="entry name" value="Helicase_C-like"/>
</dbReference>
<dbReference type="InterPro" id="IPR027417">
    <property type="entry name" value="P-loop_NTPase"/>
</dbReference>
<dbReference type="InterPro" id="IPR000185">
    <property type="entry name" value="SecA"/>
</dbReference>
<dbReference type="InterPro" id="IPR011115">
    <property type="entry name" value="SecA_DEAD"/>
</dbReference>
<dbReference type="InterPro" id="IPR014018">
    <property type="entry name" value="SecA_motor_DEAD"/>
</dbReference>
<dbReference type="InterPro" id="IPR011130">
    <property type="entry name" value="SecA_preprotein_X-link_dom"/>
</dbReference>
<dbReference type="InterPro" id="IPR044722">
    <property type="entry name" value="SecA_SF2_C"/>
</dbReference>
<dbReference type="InterPro" id="IPR011116">
    <property type="entry name" value="SecA_Wing/Scaffold"/>
</dbReference>
<dbReference type="InterPro" id="IPR036266">
    <property type="entry name" value="SecA_Wing/Scaffold_sf"/>
</dbReference>
<dbReference type="InterPro" id="IPR036670">
    <property type="entry name" value="SecA_X-link_sf"/>
</dbReference>
<dbReference type="NCBIfam" id="NF009538">
    <property type="entry name" value="PRK12904.1"/>
    <property type="match status" value="1"/>
</dbReference>
<dbReference type="NCBIfam" id="TIGR00963">
    <property type="entry name" value="secA"/>
    <property type="match status" value="1"/>
</dbReference>
<dbReference type="PANTHER" id="PTHR30612:SF0">
    <property type="entry name" value="CHLOROPLAST PROTEIN-TRANSPORTING ATPASE"/>
    <property type="match status" value="1"/>
</dbReference>
<dbReference type="PANTHER" id="PTHR30612">
    <property type="entry name" value="SECA INNER MEMBRANE COMPONENT OF SEC PROTEIN SECRETION SYSTEM"/>
    <property type="match status" value="1"/>
</dbReference>
<dbReference type="Pfam" id="PF21090">
    <property type="entry name" value="P-loop_SecA"/>
    <property type="match status" value="1"/>
</dbReference>
<dbReference type="Pfam" id="PF07517">
    <property type="entry name" value="SecA_DEAD"/>
    <property type="match status" value="1"/>
</dbReference>
<dbReference type="Pfam" id="PF01043">
    <property type="entry name" value="SecA_PP_bind"/>
    <property type="match status" value="1"/>
</dbReference>
<dbReference type="Pfam" id="PF07516">
    <property type="entry name" value="SecA_SW"/>
    <property type="match status" value="1"/>
</dbReference>
<dbReference type="PRINTS" id="PR00906">
    <property type="entry name" value="SECA"/>
</dbReference>
<dbReference type="SMART" id="SM00957">
    <property type="entry name" value="SecA_DEAD"/>
    <property type="match status" value="1"/>
</dbReference>
<dbReference type="SMART" id="SM00958">
    <property type="entry name" value="SecA_PP_bind"/>
    <property type="match status" value="1"/>
</dbReference>
<dbReference type="SUPFAM" id="SSF81886">
    <property type="entry name" value="Helical scaffold and wing domains of SecA"/>
    <property type="match status" value="1"/>
</dbReference>
<dbReference type="SUPFAM" id="SSF52540">
    <property type="entry name" value="P-loop containing nucleoside triphosphate hydrolases"/>
    <property type="match status" value="2"/>
</dbReference>
<dbReference type="SUPFAM" id="SSF81767">
    <property type="entry name" value="Pre-protein crosslinking domain of SecA"/>
    <property type="match status" value="1"/>
</dbReference>
<dbReference type="PROSITE" id="PS51196">
    <property type="entry name" value="SECA_MOTOR_DEAD"/>
    <property type="match status" value="1"/>
</dbReference>
<accession>Q0S2Y0</accession>
<keyword id="KW-0067">ATP-binding</keyword>
<keyword id="KW-1003">Cell membrane</keyword>
<keyword id="KW-0963">Cytoplasm</keyword>
<keyword id="KW-0472">Membrane</keyword>
<keyword id="KW-0547">Nucleotide-binding</keyword>
<keyword id="KW-0653">Protein transport</keyword>
<keyword id="KW-1278">Translocase</keyword>
<keyword id="KW-0811">Translocation</keyword>
<keyword id="KW-0813">Transport</keyword>
<evidence type="ECO:0000255" key="1">
    <source>
        <dbReference type="HAMAP-Rule" id="MF_01382"/>
    </source>
</evidence>
<evidence type="ECO:0000256" key="2">
    <source>
        <dbReference type="SAM" id="MobiDB-lite"/>
    </source>
</evidence>
<evidence type="ECO:0000305" key="3"/>
<name>SECA_RHOJR</name>
<protein>
    <recommendedName>
        <fullName evidence="1">Protein translocase subunit SecA</fullName>
        <ecNumber evidence="1">7.4.2.8</ecNumber>
    </recommendedName>
</protein>
<organism>
    <name type="scientific">Rhodococcus jostii (strain RHA1)</name>
    <dbReference type="NCBI Taxonomy" id="101510"/>
    <lineage>
        <taxon>Bacteria</taxon>
        <taxon>Bacillati</taxon>
        <taxon>Actinomycetota</taxon>
        <taxon>Actinomycetes</taxon>
        <taxon>Mycobacteriales</taxon>
        <taxon>Nocardiaceae</taxon>
        <taxon>Rhodococcus</taxon>
    </lineage>
</organism>
<reference key="1">
    <citation type="journal article" date="2006" name="Proc. Natl. Acad. Sci. U.S.A.">
        <title>The complete genome of Rhodococcus sp. RHA1 provides insights into a catabolic powerhouse.</title>
        <authorList>
            <person name="McLeod M.P."/>
            <person name="Warren R.L."/>
            <person name="Hsiao W.W.L."/>
            <person name="Araki N."/>
            <person name="Myhre M."/>
            <person name="Fernandes C."/>
            <person name="Miyazawa D."/>
            <person name="Wong W."/>
            <person name="Lillquist A.L."/>
            <person name="Wang D."/>
            <person name="Dosanjh M."/>
            <person name="Hara H."/>
            <person name="Petrescu A."/>
            <person name="Morin R.D."/>
            <person name="Yang G."/>
            <person name="Stott J.M."/>
            <person name="Schein J.E."/>
            <person name="Shin H."/>
            <person name="Smailus D."/>
            <person name="Siddiqui A.S."/>
            <person name="Marra M.A."/>
            <person name="Jones S.J.M."/>
            <person name="Holt R."/>
            <person name="Brinkman F.S.L."/>
            <person name="Miyauchi K."/>
            <person name="Fukuda M."/>
            <person name="Davies J.E."/>
            <person name="Mohn W.W."/>
            <person name="Eltis L.D."/>
        </authorList>
    </citation>
    <scope>NUCLEOTIDE SEQUENCE [LARGE SCALE GENOMIC DNA]</scope>
    <source>
        <strain>RHA1</strain>
    </source>
</reference>
<gene>
    <name evidence="1" type="primary">secA</name>
    <name type="ordered locus">RHA1_ro06329</name>
</gene>
<comment type="function">
    <text evidence="1">Part of the Sec protein translocase complex. Interacts with the SecYEG preprotein conducting channel. Has a central role in coupling the hydrolysis of ATP to the transfer of proteins into and across the cell membrane, serving as an ATP-driven molecular motor driving the stepwise translocation of polypeptide chains across the membrane.</text>
</comment>
<comment type="catalytic activity">
    <reaction evidence="1">
        <text>ATP + H2O + cellular proteinSide 1 = ADP + phosphate + cellular proteinSide 2.</text>
        <dbReference type="EC" id="7.4.2.8"/>
    </reaction>
</comment>
<comment type="subunit">
    <text evidence="1">Monomer and homodimer. Part of the essential Sec protein translocation apparatus which comprises SecA, SecYEG and auxiliary proteins SecDF. Other proteins may also be involved.</text>
</comment>
<comment type="subcellular location">
    <subcellularLocation>
        <location evidence="1">Cell membrane</location>
        <topology evidence="1">Peripheral membrane protein</topology>
        <orientation evidence="1">Cytoplasmic side</orientation>
    </subcellularLocation>
    <subcellularLocation>
        <location evidence="1">Cytoplasm</location>
    </subcellularLocation>
    <text evidence="1">Distribution is 50-50.</text>
</comment>
<comment type="similarity">
    <text evidence="1">Belongs to the SecA family.</text>
</comment>
<comment type="sequence caution" evidence="3">
    <conflict type="erroneous initiation">
        <sequence resource="EMBL-CDS" id="ABG98106"/>
    </conflict>
    <text>Truncated N-terminus.</text>
</comment>
<feature type="chain" id="PRO_0000318416" description="Protein translocase subunit SecA">
    <location>
        <begin position="1"/>
        <end position="955"/>
    </location>
</feature>
<feature type="region of interest" description="Disordered" evidence="2">
    <location>
        <begin position="861"/>
        <end position="955"/>
    </location>
</feature>
<feature type="compositionally biased region" description="Low complexity" evidence="2">
    <location>
        <begin position="874"/>
        <end position="888"/>
    </location>
</feature>
<feature type="compositionally biased region" description="Basic residues" evidence="2">
    <location>
        <begin position="943"/>
        <end position="955"/>
    </location>
</feature>
<feature type="binding site" evidence="1">
    <location>
        <position position="87"/>
    </location>
    <ligand>
        <name>ATP</name>
        <dbReference type="ChEBI" id="CHEBI:30616"/>
    </ligand>
</feature>
<feature type="binding site" evidence="1">
    <location>
        <begin position="105"/>
        <end position="109"/>
    </location>
    <ligand>
        <name>ATP</name>
        <dbReference type="ChEBI" id="CHEBI:30616"/>
    </ligand>
</feature>
<feature type="binding site" evidence="1">
    <location>
        <position position="494"/>
    </location>
    <ligand>
        <name>ATP</name>
        <dbReference type="ChEBI" id="CHEBI:30616"/>
    </ligand>
</feature>
<proteinExistence type="inferred from homology"/>
<sequence>MPSLSLSKLLRVGEGRMVKRLKHIADHVSSLSPEVEDLTDEQLRAKTEEFRARYRDGETLDELLPEAFAVAREASWRVIDQRHFHVQIMGGAALHFGNIAEMKTGEGKTLTCVLPAYLNAIAGDGVHVVTVNDYLAKRDSEWMGRVHRFLGLDTSVILSGMSPAERRAAYAADITYGTNNEFGFDYLRDNMTHSLDDLVQRGHSFAVVDEVDSILIDEARTPLIISGPADASSKWYAEFARIAPLLKRDVHYEVDIRKRTIGVHEAGVELVEDQLGIDNLYEAANSPLVSYLNNAIKAKELYTKDKDYIVREGEVIIVDEFTGRVLVGRRYNEGMHQAIEAKEKVEIKAENQTLATITLQNYFRLYDKLSGMTGTAETEAAELHQIYNLGVIPIPTNRPMVRVDNGDLIYKTEEAKFDAVVDDVVERHEKGQPVLIGTTSVERSEYLSKQFTKRGVAHNVLNAKFHEQEAQIIAEAGRSGAVTVATNMAGRGTDVVLGGNPDIIADIALRKQGLDPVHTPDDYEAAWDDVLDQVKAEVKADADKVREAGGLYVLGTERHESRRIDNQLRGRSGRQGDPGESRFYLSLGDELMRRFNGAALESIMTRLNLPDDVPIEAKMVSKAIKSAQTQVEQQNFEIRKNVLKYDEVMNQQRTVIYNERRQILEGKDMEGQVEKMITDVVTAYVDGATAEGYVEDWDLEQLWTALKTLYPVGVDYKELVGDGDGETNDITADELRETLLTDAHDAYARREAEIDGVAGAGSMRELERRVLLSVLDRKWREHLYEMDYLKEGIGLRAMAQRDPLVEYQREGFDMFGGMLEGLKEESVGFLFNLQVEAAAPQAAQAPGVSVTAASAAATAAASPAPAAPRPLPTQEAAQQAQGTAAPSALRAKGLDDGEPRGLTYSGPAEDGNAQLSRRGAAESDDAADAGTRRQRREAARSQSKGKKAPRTKRKR</sequence>